<feature type="transit peptide" description="Mitochondrion" evidence="7">
    <location>
        <begin position="1"/>
        <end position="31"/>
    </location>
</feature>
<feature type="chain" id="PRO_0000006496" description="Succinate dehydrogenase [ubiquinone] cytochrome b small subunit, mitochondrial">
    <location>
        <begin position="32"/>
        <end position="181"/>
    </location>
</feature>
<feature type="topological domain" description="Mitochondrial matrix" evidence="2">
    <location>
        <begin position="32"/>
        <end position="66"/>
    </location>
</feature>
<feature type="transmembrane region" description="Helical" evidence="2">
    <location>
        <begin position="67"/>
        <end position="88"/>
    </location>
</feature>
<feature type="topological domain" description="Mitochondrial intermembrane" evidence="2">
    <location>
        <begin position="89"/>
        <end position="98"/>
    </location>
</feature>
<feature type="transmembrane region" description="Helical" evidence="2">
    <location>
        <begin position="99"/>
        <end position="118"/>
    </location>
</feature>
<feature type="topological domain" description="Mitochondrial matrix" evidence="2">
    <location>
        <begin position="119"/>
        <end position="127"/>
    </location>
</feature>
<feature type="transmembrane region" description="Helical" evidence="2">
    <location>
        <begin position="128"/>
        <end position="148"/>
    </location>
</feature>
<feature type="topological domain" description="Mitochondrial intermembrane" evidence="2">
    <location>
        <begin position="149"/>
        <end position="181"/>
    </location>
</feature>
<feature type="binding site" description="axial binding residue" evidence="8">
    <location>
        <position position="109"/>
    </location>
    <ligand>
        <name>heme</name>
        <dbReference type="ChEBI" id="CHEBI:30413"/>
    </ligand>
    <ligandPart>
        <name>Fe</name>
        <dbReference type="ChEBI" id="CHEBI:18248"/>
    </ligandPart>
</feature>
<feature type="binding site" evidence="1">
    <location>
        <position position="120"/>
    </location>
    <ligand>
        <name>a ubiquinone</name>
        <dbReference type="ChEBI" id="CHEBI:16389"/>
        <note>ligand shared with IP/SDHB</note>
    </ligand>
</feature>
<feature type="mutagenesis site" description="Impairs respiratory growth and reduces quinone reductase activity." evidence="3">
    <original>F</original>
    <variation>V</variation>
    <location>
        <position position="100"/>
    </location>
</feature>
<feature type="mutagenesis site" description="Impairs respiratory growth and reduces quinone reductase activity." evidence="3">
    <original>S</original>
    <variation>A</variation>
    <location>
        <position position="102"/>
    </location>
</feature>
<feature type="mutagenesis site" description="Decreases SDH cytochrome b content." evidence="5">
    <original>C</original>
    <variation>A</variation>
    <location>
        <position position="109"/>
    </location>
</feature>
<feature type="mutagenesis site" description="Abolishes quinone reductase activity. Little effect on complex assembly." evidence="6">
    <original>Y</original>
    <variation>C</variation>
    <location>
        <position position="120"/>
    </location>
</feature>
<feature type="mutagenesis site" description="Reduces SDH FAD content. Probably impairs complex assembly." evidence="3">
    <original>H</original>
    <variation>L</variation>
    <location>
        <position position="130"/>
    </location>
</feature>
<sequence length="181" mass="20249">MMLPRSMKFMTGRRIFHTATVRAFQSTAKKSLTIPFLPVLPQKPGGVRGTPNDAYVPPPENKLEGSYHWYMEKIFALSVVPLATTAMLTTGPLSTAADSFFSVMLLGYCYMEFNSCITDYISERVYGVWHKYAMYMLGLGSAVSLFGIYKLETENDGVVGLVKSLWDSSEKDNSQKIEAKK</sequence>
<keyword id="KW-0903">Direct protein sequencing</keyword>
<keyword id="KW-0249">Electron transport</keyword>
<keyword id="KW-0349">Heme</keyword>
<keyword id="KW-0408">Iron</keyword>
<keyword id="KW-0472">Membrane</keyword>
<keyword id="KW-0479">Metal-binding</keyword>
<keyword id="KW-0496">Mitochondrion</keyword>
<keyword id="KW-0999">Mitochondrion inner membrane</keyword>
<keyword id="KW-0874">Quinone</keyword>
<keyword id="KW-1185">Reference proteome</keyword>
<keyword id="KW-0809">Transit peptide</keyword>
<keyword id="KW-0812">Transmembrane</keyword>
<keyword id="KW-1133">Transmembrane helix</keyword>
<keyword id="KW-0813">Transport</keyword>
<keyword id="KW-0816">Tricarboxylic acid cycle</keyword>
<gene>
    <name type="primary">SDH4</name>
    <name type="synonym">ACN18</name>
    <name type="ordered locus">YDR178W</name>
    <name type="ORF">YD9395.11</name>
</gene>
<comment type="function">
    <text>Membrane-anchoring subunit of succinate dehydrogenase (SDH) that is involved in system II of the mitochondrial electron transport chain and is responsible for transferring electrons from succinate to ubiquinone (coenzyme Q). SDH3 and SDH4 form the membrane dimer that anchors the catalytic dimer formed by SDH1 and SDH2 to the matrix surface of the mitochondrial inner membrane. Electrons originating from the catalytic dimer enter the membrane dimer for ubiquinone reduction.</text>
</comment>
<comment type="pathway">
    <text>Carbohydrate metabolism; tricarboxylic acid cycle.</text>
</comment>
<comment type="subunit">
    <text>Forms part of complex II containing four subunits: a flavoprotein (FP), an iron-sulfur protein (IP) and a cytochrome b composed of a large and a small subunit.</text>
</comment>
<comment type="subcellular location">
    <subcellularLocation>
        <location>Mitochondrion inner membrane</location>
        <topology>Multi-pass membrane protein</topology>
    </subcellularLocation>
</comment>
<comment type="miscellaneous">
    <text evidence="4">Present with 7920 molecules/cell in log phase SD medium.</text>
</comment>
<comment type="similarity">
    <text evidence="8">Belongs to the CybS family.</text>
</comment>
<name>DHSD_YEAST</name>
<evidence type="ECO:0000250" key="1"/>
<evidence type="ECO:0000255" key="2"/>
<evidence type="ECO:0000269" key="3">
    <source>
    </source>
</evidence>
<evidence type="ECO:0000269" key="4">
    <source>
    </source>
</evidence>
<evidence type="ECO:0000269" key="5">
    <source>
    </source>
</evidence>
<evidence type="ECO:0000269" key="6">
    <source>
    </source>
</evidence>
<evidence type="ECO:0000269" key="7">
    <source>
    </source>
</evidence>
<evidence type="ECO:0000305" key="8"/>
<dbReference type="EMBL" id="L26333">
    <property type="protein sequence ID" value="AAA19637.1"/>
    <property type="molecule type" value="Unassigned_RNA"/>
</dbReference>
<dbReference type="EMBL" id="Z46727">
    <property type="protein sequence ID" value="CAA86683.1"/>
    <property type="molecule type" value="Genomic_DNA"/>
</dbReference>
<dbReference type="EMBL" id="AY557671">
    <property type="protein sequence ID" value="AAS55997.1"/>
    <property type="molecule type" value="Genomic_DNA"/>
</dbReference>
<dbReference type="EMBL" id="BK006938">
    <property type="protein sequence ID" value="DAA12020.1"/>
    <property type="molecule type" value="Genomic_DNA"/>
</dbReference>
<dbReference type="PIR" id="A54380">
    <property type="entry name" value="A54380"/>
</dbReference>
<dbReference type="RefSeq" id="NP_010463.1">
    <property type="nucleotide sequence ID" value="NM_001180485.1"/>
</dbReference>
<dbReference type="SMR" id="P37298"/>
<dbReference type="BioGRID" id="32231">
    <property type="interactions" value="101"/>
</dbReference>
<dbReference type="ComplexPortal" id="CPX-565">
    <property type="entry name" value="Mitochondrial respiratory chain complex II"/>
</dbReference>
<dbReference type="DIP" id="DIP-5704N"/>
<dbReference type="FunCoup" id="P37298">
    <property type="interactions" value="321"/>
</dbReference>
<dbReference type="IntAct" id="P37298">
    <property type="interactions" value="5"/>
</dbReference>
<dbReference type="MINT" id="P37298"/>
<dbReference type="STRING" id="4932.YDR178W"/>
<dbReference type="ChEMBL" id="CHEMBL3308955"/>
<dbReference type="iPTMnet" id="P37298"/>
<dbReference type="PaxDb" id="4932-YDR178W"/>
<dbReference type="PeptideAtlas" id="P37298"/>
<dbReference type="EnsemblFungi" id="YDR178W_mRNA">
    <property type="protein sequence ID" value="YDR178W"/>
    <property type="gene ID" value="YDR178W"/>
</dbReference>
<dbReference type="GeneID" id="851758"/>
<dbReference type="KEGG" id="sce:YDR178W"/>
<dbReference type="AGR" id="SGD:S000002585"/>
<dbReference type="SGD" id="S000002585">
    <property type="gene designation" value="SDH4"/>
</dbReference>
<dbReference type="VEuPathDB" id="FungiDB:YDR178W"/>
<dbReference type="eggNOG" id="KOG4097">
    <property type="taxonomic scope" value="Eukaryota"/>
</dbReference>
<dbReference type="GeneTree" id="ENSGT00940000176639"/>
<dbReference type="HOGENOM" id="CLU_096618_0_0_1"/>
<dbReference type="InParanoid" id="P37298"/>
<dbReference type="OMA" id="AGWESCI"/>
<dbReference type="OrthoDB" id="18577at2759"/>
<dbReference type="BioCyc" id="MetaCyc:YDR178W-MONOMER"/>
<dbReference type="BioCyc" id="YEAST:YDR178W-MONOMER"/>
<dbReference type="UniPathway" id="UPA00223"/>
<dbReference type="BioGRID-ORCS" id="851758">
    <property type="hits" value="10 hits in 10 CRISPR screens"/>
</dbReference>
<dbReference type="PRO" id="PR:P37298"/>
<dbReference type="Proteomes" id="UP000002311">
    <property type="component" value="Chromosome IV"/>
</dbReference>
<dbReference type="RNAct" id="P37298">
    <property type="molecule type" value="protein"/>
</dbReference>
<dbReference type="GO" id="GO:0005743">
    <property type="term" value="C:mitochondrial inner membrane"/>
    <property type="evidence" value="ECO:0000314"/>
    <property type="project" value="ComplexPortal"/>
</dbReference>
<dbReference type="GO" id="GO:0005739">
    <property type="term" value="C:mitochondrion"/>
    <property type="evidence" value="ECO:0007005"/>
    <property type="project" value="SGD"/>
</dbReference>
<dbReference type="GO" id="GO:0045273">
    <property type="term" value="C:respiratory chain complex II (succinate dehydrogenase)"/>
    <property type="evidence" value="ECO:0000314"/>
    <property type="project" value="SGD"/>
</dbReference>
<dbReference type="GO" id="GO:0020037">
    <property type="term" value="F:heme binding"/>
    <property type="evidence" value="ECO:0000250"/>
    <property type="project" value="UniProtKB"/>
</dbReference>
<dbReference type="GO" id="GO:0046872">
    <property type="term" value="F:metal ion binding"/>
    <property type="evidence" value="ECO:0007669"/>
    <property type="project" value="UniProtKB-KW"/>
</dbReference>
<dbReference type="GO" id="GO:0048039">
    <property type="term" value="F:ubiquinone binding"/>
    <property type="evidence" value="ECO:0000250"/>
    <property type="project" value="UniProtKB"/>
</dbReference>
<dbReference type="GO" id="GO:0045333">
    <property type="term" value="P:cellular respiration"/>
    <property type="evidence" value="ECO:0000315"/>
    <property type="project" value="SGD"/>
</dbReference>
<dbReference type="GO" id="GO:0006121">
    <property type="term" value="P:mitochondrial electron transport, succinate to ubiquinone"/>
    <property type="evidence" value="ECO:0000314"/>
    <property type="project" value="ComplexPortal"/>
</dbReference>
<dbReference type="GO" id="GO:0006099">
    <property type="term" value="P:tricarboxylic acid cycle"/>
    <property type="evidence" value="ECO:0000314"/>
    <property type="project" value="ComplexPortal"/>
</dbReference>
<dbReference type="CDD" id="cd03496">
    <property type="entry name" value="SQR_TypeC_CybS"/>
    <property type="match status" value="1"/>
</dbReference>
<dbReference type="FunFam" id="1.20.1300.10:FF:000007">
    <property type="entry name" value="Succinate dehydrogenase [ubiquinone] cytochrome b small subunit"/>
    <property type="match status" value="1"/>
</dbReference>
<dbReference type="Gene3D" id="1.20.1300.10">
    <property type="entry name" value="Fumarate reductase/succinate dehydrogenase, transmembrane subunit"/>
    <property type="match status" value="1"/>
</dbReference>
<dbReference type="InterPro" id="IPR007992">
    <property type="entry name" value="CybS"/>
</dbReference>
<dbReference type="InterPro" id="IPR034804">
    <property type="entry name" value="SQR/QFR_C/D"/>
</dbReference>
<dbReference type="PANTHER" id="PTHR13337:SF5">
    <property type="entry name" value="MITOCHONDRIAL INNER MEMBRANE PROTEIN SHH4-RELATED"/>
    <property type="match status" value="1"/>
</dbReference>
<dbReference type="PANTHER" id="PTHR13337">
    <property type="entry name" value="SUCCINATE DEHYDROGENASE"/>
    <property type="match status" value="1"/>
</dbReference>
<dbReference type="Pfam" id="PF05328">
    <property type="entry name" value="CybS"/>
    <property type="match status" value="1"/>
</dbReference>
<accession>P37298</accession>
<accession>D6VSG0</accession>
<organism>
    <name type="scientific">Saccharomyces cerevisiae (strain ATCC 204508 / S288c)</name>
    <name type="common">Baker's yeast</name>
    <dbReference type="NCBI Taxonomy" id="559292"/>
    <lineage>
        <taxon>Eukaryota</taxon>
        <taxon>Fungi</taxon>
        <taxon>Dikarya</taxon>
        <taxon>Ascomycota</taxon>
        <taxon>Saccharomycotina</taxon>
        <taxon>Saccharomycetes</taxon>
        <taxon>Saccharomycetales</taxon>
        <taxon>Saccharomycetaceae</taxon>
        <taxon>Saccharomyces</taxon>
    </lineage>
</organism>
<reference key="1">
    <citation type="journal article" date="1994" name="J. Biol. Chem.">
        <title>Isolation and characterization of the Saccharomyces cerevisiae SDH4 gene encoding a membrane anchor subunit of succinate dehydrogenase.</title>
        <authorList>
            <person name="Bullis B.L."/>
            <person name="Lemire B.D."/>
        </authorList>
    </citation>
    <scope>NUCLEOTIDE SEQUENCE</scope>
    <scope>PROTEIN SEQUENCE OF 32-62</scope>
    <source>
        <strain>S288c / GRF88</strain>
    </source>
</reference>
<reference key="2">
    <citation type="journal article" date="1997" name="Nature">
        <title>The nucleotide sequence of Saccharomyces cerevisiae chromosome IV.</title>
        <authorList>
            <person name="Jacq C."/>
            <person name="Alt-Moerbe J."/>
            <person name="Andre B."/>
            <person name="Arnold W."/>
            <person name="Bahr A."/>
            <person name="Ballesta J.P.G."/>
            <person name="Bargues M."/>
            <person name="Baron L."/>
            <person name="Becker A."/>
            <person name="Biteau N."/>
            <person name="Bloecker H."/>
            <person name="Blugeon C."/>
            <person name="Boskovic J."/>
            <person name="Brandt P."/>
            <person name="Brueckner M."/>
            <person name="Buitrago M.J."/>
            <person name="Coster F."/>
            <person name="Delaveau T."/>
            <person name="del Rey F."/>
            <person name="Dujon B."/>
            <person name="Eide L.G."/>
            <person name="Garcia-Cantalejo J.M."/>
            <person name="Goffeau A."/>
            <person name="Gomez-Peris A."/>
            <person name="Granotier C."/>
            <person name="Hanemann V."/>
            <person name="Hankeln T."/>
            <person name="Hoheisel J.D."/>
            <person name="Jaeger W."/>
            <person name="Jimenez A."/>
            <person name="Jonniaux J.-L."/>
            <person name="Kraemer C."/>
            <person name="Kuester H."/>
            <person name="Laamanen P."/>
            <person name="Legros Y."/>
            <person name="Louis E.J."/>
            <person name="Moeller-Rieker S."/>
            <person name="Monnet A."/>
            <person name="Moro M."/>
            <person name="Mueller-Auer S."/>
            <person name="Nussbaumer B."/>
            <person name="Paricio N."/>
            <person name="Paulin L."/>
            <person name="Perea J."/>
            <person name="Perez-Alonso M."/>
            <person name="Perez-Ortin J.E."/>
            <person name="Pohl T.M."/>
            <person name="Prydz H."/>
            <person name="Purnelle B."/>
            <person name="Rasmussen S.W."/>
            <person name="Remacha M.A."/>
            <person name="Revuelta J.L."/>
            <person name="Rieger M."/>
            <person name="Salom D."/>
            <person name="Saluz H.P."/>
            <person name="Saiz J.E."/>
            <person name="Saren A.-M."/>
            <person name="Schaefer M."/>
            <person name="Scharfe M."/>
            <person name="Schmidt E.R."/>
            <person name="Schneider C."/>
            <person name="Scholler P."/>
            <person name="Schwarz S."/>
            <person name="Soler-Mira A."/>
            <person name="Urrestarazu L.A."/>
            <person name="Verhasselt P."/>
            <person name="Vissers S."/>
            <person name="Voet M."/>
            <person name="Volckaert G."/>
            <person name="Wagner G."/>
            <person name="Wambutt R."/>
            <person name="Wedler E."/>
            <person name="Wedler H."/>
            <person name="Woelfl S."/>
            <person name="Harris D.E."/>
            <person name="Bowman S."/>
            <person name="Brown D."/>
            <person name="Churcher C.M."/>
            <person name="Connor R."/>
            <person name="Dedman K."/>
            <person name="Gentles S."/>
            <person name="Hamlin N."/>
            <person name="Hunt S."/>
            <person name="Jones L."/>
            <person name="McDonald S."/>
            <person name="Murphy L.D."/>
            <person name="Niblett D."/>
            <person name="Odell C."/>
            <person name="Oliver K."/>
            <person name="Rajandream M.A."/>
            <person name="Richards C."/>
            <person name="Shore L."/>
            <person name="Walsh S.V."/>
            <person name="Barrell B.G."/>
            <person name="Dietrich F.S."/>
            <person name="Mulligan J.T."/>
            <person name="Allen E."/>
            <person name="Araujo R."/>
            <person name="Aviles E."/>
            <person name="Berno A."/>
            <person name="Carpenter J."/>
            <person name="Chen E."/>
            <person name="Cherry J.M."/>
            <person name="Chung E."/>
            <person name="Duncan M."/>
            <person name="Hunicke-Smith S."/>
            <person name="Hyman R.W."/>
            <person name="Komp C."/>
            <person name="Lashkari D."/>
            <person name="Lew H."/>
            <person name="Lin D."/>
            <person name="Mosedale D."/>
            <person name="Nakahara K."/>
            <person name="Namath A."/>
            <person name="Oefner P."/>
            <person name="Oh C."/>
            <person name="Petel F.X."/>
            <person name="Roberts D."/>
            <person name="Schramm S."/>
            <person name="Schroeder M."/>
            <person name="Shogren T."/>
            <person name="Shroff N."/>
            <person name="Winant A."/>
            <person name="Yelton M.A."/>
            <person name="Botstein D."/>
            <person name="Davis R.W."/>
            <person name="Johnston M."/>
            <person name="Andrews S."/>
            <person name="Brinkman R."/>
            <person name="Cooper J."/>
            <person name="Ding H."/>
            <person name="Du Z."/>
            <person name="Favello A."/>
            <person name="Fulton L."/>
            <person name="Gattung S."/>
            <person name="Greco T."/>
            <person name="Hallsworth K."/>
            <person name="Hawkins J."/>
            <person name="Hillier L.W."/>
            <person name="Jier M."/>
            <person name="Johnson D."/>
            <person name="Johnston L."/>
            <person name="Kirsten J."/>
            <person name="Kucaba T."/>
            <person name="Langston Y."/>
            <person name="Latreille P."/>
            <person name="Le T."/>
            <person name="Mardis E."/>
            <person name="Menezes S."/>
            <person name="Miller N."/>
            <person name="Nhan M."/>
            <person name="Pauley A."/>
            <person name="Peluso D."/>
            <person name="Rifkin L."/>
            <person name="Riles L."/>
            <person name="Taich A."/>
            <person name="Trevaskis E."/>
            <person name="Vignati D."/>
            <person name="Wilcox L."/>
            <person name="Wohldman P."/>
            <person name="Vaudin M."/>
            <person name="Wilson R."/>
            <person name="Waterston R."/>
            <person name="Albermann K."/>
            <person name="Hani J."/>
            <person name="Heumann K."/>
            <person name="Kleine K."/>
            <person name="Mewes H.-W."/>
            <person name="Zollner A."/>
            <person name="Zaccaria P."/>
        </authorList>
    </citation>
    <scope>NUCLEOTIDE SEQUENCE [LARGE SCALE GENOMIC DNA]</scope>
    <source>
        <strain>ATCC 204508 / S288c</strain>
    </source>
</reference>
<reference key="3">
    <citation type="journal article" date="2014" name="G3 (Bethesda)">
        <title>The reference genome sequence of Saccharomyces cerevisiae: Then and now.</title>
        <authorList>
            <person name="Engel S.R."/>
            <person name="Dietrich F.S."/>
            <person name="Fisk D.G."/>
            <person name="Binkley G."/>
            <person name="Balakrishnan R."/>
            <person name="Costanzo M.C."/>
            <person name="Dwight S.S."/>
            <person name="Hitz B.C."/>
            <person name="Karra K."/>
            <person name="Nash R.S."/>
            <person name="Weng S."/>
            <person name="Wong E.D."/>
            <person name="Lloyd P."/>
            <person name="Skrzypek M.S."/>
            <person name="Miyasato S.R."/>
            <person name="Simison M."/>
            <person name="Cherry J.M."/>
        </authorList>
    </citation>
    <scope>GENOME REANNOTATION</scope>
    <source>
        <strain>ATCC 204508 / S288c</strain>
    </source>
</reference>
<reference key="4">
    <citation type="journal article" date="2007" name="Genome Res.">
        <title>Approaching a complete repository of sequence-verified protein-encoding clones for Saccharomyces cerevisiae.</title>
        <authorList>
            <person name="Hu Y."/>
            <person name="Rolfs A."/>
            <person name="Bhullar B."/>
            <person name="Murthy T.V.S."/>
            <person name="Zhu C."/>
            <person name="Berger M.F."/>
            <person name="Camargo A.A."/>
            <person name="Kelley F."/>
            <person name="McCarron S."/>
            <person name="Jepson D."/>
            <person name="Richardson A."/>
            <person name="Raphael J."/>
            <person name="Moreira D."/>
            <person name="Taycher E."/>
            <person name="Zuo D."/>
            <person name="Mohr S."/>
            <person name="Kane M.F."/>
            <person name="Williamson J."/>
            <person name="Simpson A.J.G."/>
            <person name="Bulyk M.L."/>
            <person name="Harlow E."/>
            <person name="Marsischky G."/>
            <person name="Kolodner R.D."/>
            <person name="LaBaer J."/>
        </authorList>
    </citation>
    <scope>NUCLEOTIDE SEQUENCE [GENOMIC DNA]</scope>
    <source>
        <strain>ATCC 204508 / S288c</strain>
    </source>
</reference>
<reference key="5">
    <citation type="journal article" date="2001" name="J. Biol. Chem.">
        <title>The quinone-binding sites of the Saccharomyces cerevisiae succinate-ubiquinone oxidoreductase.</title>
        <authorList>
            <person name="Oyedotun K.S."/>
            <person name="Lemire B.D."/>
        </authorList>
    </citation>
    <scope>MUTAGENESIS OF PHE-100; SER-102 AND HIS-130</scope>
</reference>
<reference key="6">
    <citation type="journal article" date="2002" name="Biochim. Biophys. Acta">
        <title>The Saccharomyces cerevisiae mitochondrial succinate:ubiquinone oxidoreductase.</title>
        <authorList>
            <person name="Lemire B.D."/>
            <person name="Oyedotun K.S."/>
        </authorList>
    </citation>
    <scope>REVIEW ON SUCCINATE DEHYDROGENASE</scope>
</reference>
<reference key="7">
    <citation type="journal article" date="2003" name="Nature">
        <title>Global analysis of protein expression in yeast.</title>
        <authorList>
            <person name="Ghaemmaghami S."/>
            <person name="Huh W.-K."/>
            <person name="Bower K."/>
            <person name="Howson R.W."/>
            <person name="Belle A."/>
            <person name="Dephoure N."/>
            <person name="O'Shea E.K."/>
            <person name="Weissman J.S."/>
        </authorList>
    </citation>
    <scope>LEVEL OF PROTEIN EXPRESSION [LARGE SCALE ANALYSIS]</scope>
</reference>
<reference key="8">
    <citation type="journal article" date="2004" name="J. Biol. Chem.">
        <title>Identification of the heme axial ligands in the cytochrome b562 of the Saccharomyces cerevisiae succinate dehydrogenase.</title>
        <authorList>
            <person name="Oyedotun K.S."/>
            <person name="Yau P.F."/>
            <person name="Lemire B.D."/>
        </authorList>
    </citation>
    <scope>MUTAGENESIS OF CYS-109</scope>
</reference>
<reference key="9">
    <citation type="journal article" date="2007" name="Biochim. Biophys. Acta">
        <title>The role of Sdh4p Tyr-89 in ubiquinone reduction by the Saccharomyces cerevisiae succinate dehydrogenase.</title>
        <authorList>
            <person name="Silkin Y."/>
            <person name="Oyedotun K.S."/>
            <person name="Lemire B.D."/>
        </authorList>
    </citation>
    <scope>MUTAGENESIS OF TYR-120</scope>
</reference>
<reference key="10">
    <citation type="journal article" date="2004" name="J. Biol. Chem.">
        <title>The quaternary structure of the Saccharomyces cerevisiae succinate dehydrogenase. Homology modeling, cofactor docking, and molecular dynamics simulation studies.</title>
        <authorList>
            <person name="Oyedotun K.S."/>
            <person name="Lemire B.D."/>
        </authorList>
    </citation>
    <scope>3D-STRUCTURE MODELING OF 32-181</scope>
</reference>
<protein>
    <recommendedName>
        <fullName>Succinate dehydrogenase [ubiquinone] cytochrome b small subunit, mitochondrial</fullName>
        <shortName>CybS</shortName>
    </recommendedName>
    <alternativeName>
        <fullName>Succinate-ubiquinone reductase membrane anchor subunit</fullName>
    </alternativeName>
</protein>
<proteinExistence type="evidence at protein level"/>